<sequence length="593" mass="68671">MEDYKQRIKNKLNVVPMEPGCYLMKDRNDQVIYVGKAKKLRNRLRSYFTGAHDAKTTRLVGEIRRFEFIVTSSETESLLLELNLIKQYQPRYNILLKDDKSYPFIKITKEKYPRLLVTRTVKQGTGKYFGPYPNAYSAQETKKLLDRIYPYRKCDKMPDKLCLYYHIGQCLGPCVYDVDLSKYAQMTKEITDFLNGEDKTILKSLEERMLTASESLDFERAKEYRDLIQHIQNLTNKQKIMSSDKTIRDVFGYSVDKGWMCIQVFFIRQGNMIKRDTTMIPLQQTEEEEFYTFIGQFYSLNQHILPKEVHVPRNLDKEMIQSVVDTKIVQPARGPKKDMVDLAAHNAKVSLNNKFELISRDESRTIKAIEELGTQMGIQTPIRIEAFDNSNIQGVDPVSAMVTFVDGKPDKKNYRKYKIKTVKGPDDYKSMREVVRRRYSRVLNEGLPLPDLIIVDGGKGHMNGVIDVLQNELGLDIPVAGLQKNDKHQTSELLYGASAEIVPLKKNSQAFYLLHRIQDEVHRFAITFHRQTRQKTGLKSILDDIDGIGNKRKTLLLRSFGSIKKMKEATLEDFKNIGIPENVAKNLHEQLHK</sequence>
<organism>
    <name type="scientific">Staphylococcus aureus (strain USA300)</name>
    <dbReference type="NCBI Taxonomy" id="367830"/>
    <lineage>
        <taxon>Bacteria</taxon>
        <taxon>Bacillati</taxon>
        <taxon>Bacillota</taxon>
        <taxon>Bacilli</taxon>
        <taxon>Bacillales</taxon>
        <taxon>Staphylococcaceae</taxon>
        <taxon>Staphylococcus</taxon>
    </lineage>
</organism>
<protein>
    <recommendedName>
        <fullName evidence="1">UvrABC system protein C</fullName>
        <shortName evidence="1">Protein UvrC</shortName>
    </recommendedName>
    <alternativeName>
        <fullName evidence="1">Excinuclease ABC subunit C</fullName>
    </alternativeName>
</protein>
<gene>
    <name evidence="1" type="primary">uvrC</name>
    <name type="ordered locus">SAUSA300_1045</name>
</gene>
<accession>Q2FHT5</accession>
<name>UVRC_STAA3</name>
<evidence type="ECO:0000255" key="1">
    <source>
        <dbReference type="HAMAP-Rule" id="MF_00203"/>
    </source>
</evidence>
<evidence type="ECO:0000305" key="2"/>
<reference key="1">
    <citation type="journal article" date="2006" name="Lancet">
        <title>Complete genome sequence of USA300, an epidemic clone of community-acquired meticillin-resistant Staphylococcus aureus.</title>
        <authorList>
            <person name="Diep B.A."/>
            <person name="Gill S.R."/>
            <person name="Chang R.F."/>
            <person name="Phan T.H."/>
            <person name="Chen J.H."/>
            <person name="Davidson M.G."/>
            <person name="Lin F."/>
            <person name="Lin J."/>
            <person name="Carleton H.A."/>
            <person name="Mongodin E.F."/>
            <person name="Sensabaugh G.F."/>
            <person name="Perdreau-Remington F."/>
        </authorList>
    </citation>
    <scope>NUCLEOTIDE SEQUENCE [LARGE SCALE GENOMIC DNA]</scope>
    <source>
        <strain>USA300</strain>
    </source>
</reference>
<dbReference type="EMBL" id="CP000255">
    <property type="protein sequence ID" value="ABD21331.1"/>
    <property type="status" value="ALT_INIT"/>
    <property type="molecule type" value="Genomic_DNA"/>
</dbReference>
<dbReference type="RefSeq" id="WP_000390529.1">
    <property type="nucleotide sequence ID" value="NZ_CP027476.1"/>
</dbReference>
<dbReference type="SMR" id="Q2FHT5"/>
<dbReference type="KEGG" id="saa:SAUSA300_1045"/>
<dbReference type="HOGENOM" id="CLU_014841_3_2_9"/>
<dbReference type="OMA" id="HIECFDN"/>
<dbReference type="Proteomes" id="UP000001939">
    <property type="component" value="Chromosome"/>
</dbReference>
<dbReference type="GO" id="GO:0005737">
    <property type="term" value="C:cytoplasm"/>
    <property type="evidence" value="ECO:0007669"/>
    <property type="project" value="UniProtKB-SubCell"/>
</dbReference>
<dbReference type="GO" id="GO:0009380">
    <property type="term" value="C:excinuclease repair complex"/>
    <property type="evidence" value="ECO:0007669"/>
    <property type="project" value="InterPro"/>
</dbReference>
<dbReference type="GO" id="GO:0003677">
    <property type="term" value="F:DNA binding"/>
    <property type="evidence" value="ECO:0007669"/>
    <property type="project" value="UniProtKB-UniRule"/>
</dbReference>
<dbReference type="GO" id="GO:0009381">
    <property type="term" value="F:excinuclease ABC activity"/>
    <property type="evidence" value="ECO:0007669"/>
    <property type="project" value="UniProtKB-UniRule"/>
</dbReference>
<dbReference type="GO" id="GO:0006289">
    <property type="term" value="P:nucleotide-excision repair"/>
    <property type="evidence" value="ECO:0007669"/>
    <property type="project" value="UniProtKB-UniRule"/>
</dbReference>
<dbReference type="GO" id="GO:0009432">
    <property type="term" value="P:SOS response"/>
    <property type="evidence" value="ECO:0007669"/>
    <property type="project" value="UniProtKB-UniRule"/>
</dbReference>
<dbReference type="CDD" id="cd10434">
    <property type="entry name" value="GIY-YIG_UvrC_Cho"/>
    <property type="match status" value="1"/>
</dbReference>
<dbReference type="FunFam" id="3.30.420.340:FF:000002">
    <property type="entry name" value="UvrABC system protein C"/>
    <property type="match status" value="1"/>
</dbReference>
<dbReference type="FunFam" id="3.40.1440.10:FF:000001">
    <property type="entry name" value="UvrABC system protein C"/>
    <property type="match status" value="1"/>
</dbReference>
<dbReference type="FunFam" id="4.10.860.10:FF:000007">
    <property type="entry name" value="UvrABC system protein C"/>
    <property type="match status" value="1"/>
</dbReference>
<dbReference type="Gene3D" id="1.10.150.20">
    <property type="entry name" value="5' to 3' exonuclease, C-terminal subdomain"/>
    <property type="match status" value="1"/>
</dbReference>
<dbReference type="Gene3D" id="3.40.1440.10">
    <property type="entry name" value="GIY-YIG endonuclease"/>
    <property type="match status" value="1"/>
</dbReference>
<dbReference type="Gene3D" id="4.10.860.10">
    <property type="entry name" value="UVR domain"/>
    <property type="match status" value="1"/>
</dbReference>
<dbReference type="Gene3D" id="3.30.420.340">
    <property type="entry name" value="UvrC, RNAse H endonuclease domain"/>
    <property type="match status" value="1"/>
</dbReference>
<dbReference type="HAMAP" id="MF_00203">
    <property type="entry name" value="UvrC"/>
    <property type="match status" value="1"/>
</dbReference>
<dbReference type="InterPro" id="IPR000305">
    <property type="entry name" value="GIY-YIG_endonuc"/>
</dbReference>
<dbReference type="InterPro" id="IPR035901">
    <property type="entry name" value="GIY-YIG_endonuc_sf"/>
</dbReference>
<dbReference type="InterPro" id="IPR047296">
    <property type="entry name" value="GIY-YIG_UvrC_Cho"/>
</dbReference>
<dbReference type="InterPro" id="IPR010994">
    <property type="entry name" value="RuvA_2-like"/>
</dbReference>
<dbReference type="InterPro" id="IPR001943">
    <property type="entry name" value="UVR_dom"/>
</dbReference>
<dbReference type="InterPro" id="IPR036876">
    <property type="entry name" value="UVR_dom_sf"/>
</dbReference>
<dbReference type="InterPro" id="IPR050066">
    <property type="entry name" value="UvrABC_protein_C"/>
</dbReference>
<dbReference type="InterPro" id="IPR004791">
    <property type="entry name" value="UvrC"/>
</dbReference>
<dbReference type="InterPro" id="IPR001162">
    <property type="entry name" value="UvrC_RNase_H_dom"/>
</dbReference>
<dbReference type="InterPro" id="IPR038476">
    <property type="entry name" value="UvrC_RNase_H_dom_sf"/>
</dbReference>
<dbReference type="NCBIfam" id="TIGR00194">
    <property type="entry name" value="uvrC"/>
    <property type="match status" value="1"/>
</dbReference>
<dbReference type="PANTHER" id="PTHR30562:SF1">
    <property type="entry name" value="UVRABC SYSTEM PROTEIN C"/>
    <property type="match status" value="1"/>
</dbReference>
<dbReference type="PANTHER" id="PTHR30562">
    <property type="entry name" value="UVRC/OXIDOREDUCTASE"/>
    <property type="match status" value="1"/>
</dbReference>
<dbReference type="Pfam" id="PF01541">
    <property type="entry name" value="GIY-YIG"/>
    <property type="match status" value="1"/>
</dbReference>
<dbReference type="Pfam" id="PF02151">
    <property type="entry name" value="UVR"/>
    <property type="match status" value="1"/>
</dbReference>
<dbReference type="Pfam" id="PF22920">
    <property type="entry name" value="UvrC_RNaseH"/>
    <property type="match status" value="1"/>
</dbReference>
<dbReference type="Pfam" id="PF08459">
    <property type="entry name" value="UvrC_RNaseH_dom"/>
    <property type="match status" value="1"/>
</dbReference>
<dbReference type="SMART" id="SM00465">
    <property type="entry name" value="GIYc"/>
    <property type="match status" value="1"/>
</dbReference>
<dbReference type="SUPFAM" id="SSF46600">
    <property type="entry name" value="C-terminal UvrC-binding domain of UvrB"/>
    <property type="match status" value="1"/>
</dbReference>
<dbReference type="SUPFAM" id="SSF82771">
    <property type="entry name" value="GIY-YIG endonuclease"/>
    <property type="match status" value="1"/>
</dbReference>
<dbReference type="SUPFAM" id="SSF47781">
    <property type="entry name" value="RuvA domain 2-like"/>
    <property type="match status" value="1"/>
</dbReference>
<dbReference type="PROSITE" id="PS50164">
    <property type="entry name" value="GIY_YIG"/>
    <property type="match status" value="1"/>
</dbReference>
<dbReference type="PROSITE" id="PS50151">
    <property type="entry name" value="UVR"/>
    <property type="match status" value="1"/>
</dbReference>
<dbReference type="PROSITE" id="PS50165">
    <property type="entry name" value="UVRC"/>
    <property type="match status" value="1"/>
</dbReference>
<comment type="function">
    <text evidence="1">The UvrABC repair system catalyzes the recognition and processing of DNA lesions. UvrC both incises the 5' and 3' sides of the lesion. The N-terminal half is responsible for the 3' incision and the C-terminal half is responsible for the 5' incision.</text>
</comment>
<comment type="subunit">
    <text evidence="1">Interacts with UvrB in an incision complex.</text>
</comment>
<comment type="subcellular location">
    <subcellularLocation>
        <location evidence="1">Cytoplasm</location>
    </subcellularLocation>
</comment>
<comment type="similarity">
    <text evidence="1">Belongs to the UvrC family.</text>
</comment>
<comment type="sequence caution" evidence="2">
    <conflict type="erroneous initiation">
        <sequence resource="EMBL-CDS" id="ABD21331"/>
    </conflict>
</comment>
<keyword id="KW-0963">Cytoplasm</keyword>
<keyword id="KW-0227">DNA damage</keyword>
<keyword id="KW-0228">DNA excision</keyword>
<keyword id="KW-0234">DNA repair</keyword>
<keyword id="KW-0267">Excision nuclease</keyword>
<keyword id="KW-0742">SOS response</keyword>
<proteinExistence type="inferred from homology"/>
<feature type="chain" id="PRO_0000264956" description="UvrABC system protein C">
    <location>
        <begin position="1"/>
        <end position="593"/>
    </location>
</feature>
<feature type="domain" description="GIY-YIG" evidence="1">
    <location>
        <begin position="17"/>
        <end position="94"/>
    </location>
</feature>
<feature type="domain" description="UVR" evidence="1">
    <location>
        <begin position="199"/>
        <end position="234"/>
    </location>
</feature>